<sequence>MAIKVLVVDDSSFFRRRVSEIVNQDPELEVIATASNGAEAVKMAAELNPQVITMDIEMPVMDGITAVREIMAKCPTPILMFSSLTHDGAKATLDALDAGALDFLPKRFEDIATNKDDAILLLQQRVKALGRRRIFRPVVRPTTPTPPPRSSASSVLGGVSTHTQPAPVRSSHAASIRPSGKQYKLLLIGTSTGGPVALQKILTQFPANYPHPILLIQHMPAAFTPAFANRLNGLCKIEVKEAANGDVLRPGCAYLAPGGMQMMVERTGVTGRVKVLAGSAEMNYKPCVDITFASASKAFGGDVLAVVLTGMGADGREGARMLKSAGATIWAQDEASCVVYGMPQAVASAGIATQSISLDNMAESILKESARG</sequence>
<name>CHEB1_SHESM</name>
<gene>
    <name evidence="1" type="primary">cheB1</name>
    <name type="ordered locus">Shewmr4_1303</name>
</gene>
<accession>Q0HKN5</accession>
<feature type="chain" id="PRO_0000264321" description="Protein-glutamate methylesterase/protein-glutamine glutaminase 1">
    <location>
        <begin position="1"/>
        <end position="372"/>
    </location>
</feature>
<feature type="domain" description="Response regulatory" evidence="1">
    <location>
        <begin position="4"/>
        <end position="121"/>
    </location>
</feature>
<feature type="domain" description="CheB-type methylesterase" evidence="1">
    <location>
        <begin position="179"/>
        <end position="372"/>
    </location>
</feature>
<feature type="region of interest" description="Disordered" evidence="2">
    <location>
        <begin position="138"/>
        <end position="174"/>
    </location>
</feature>
<feature type="active site" evidence="1">
    <location>
        <position position="191"/>
    </location>
</feature>
<feature type="active site" evidence="1">
    <location>
        <position position="218"/>
    </location>
</feature>
<feature type="active site" evidence="1">
    <location>
        <position position="314"/>
    </location>
</feature>
<feature type="modified residue" description="4-aspartylphosphate" evidence="1">
    <location>
        <position position="55"/>
    </location>
</feature>
<organism>
    <name type="scientific">Shewanella sp. (strain MR-4)</name>
    <dbReference type="NCBI Taxonomy" id="60480"/>
    <lineage>
        <taxon>Bacteria</taxon>
        <taxon>Pseudomonadati</taxon>
        <taxon>Pseudomonadota</taxon>
        <taxon>Gammaproteobacteria</taxon>
        <taxon>Alteromonadales</taxon>
        <taxon>Shewanellaceae</taxon>
        <taxon>Shewanella</taxon>
    </lineage>
</organism>
<evidence type="ECO:0000255" key="1">
    <source>
        <dbReference type="HAMAP-Rule" id="MF_00099"/>
    </source>
</evidence>
<evidence type="ECO:0000256" key="2">
    <source>
        <dbReference type="SAM" id="MobiDB-lite"/>
    </source>
</evidence>
<comment type="function">
    <text evidence="1">Involved in chemotaxis. Part of a chemotaxis signal transduction system that modulates chemotaxis in response to various stimuli. Catalyzes the demethylation of specific methylglutamate residues introduced into the chemoreceptors (methyl-accepting chemotaxis proteins or MCP) by CheR. Also mediates the irreversible deamidation of specific glutamine residues to glutamic acid.</text>
</comment>
<comment type="catalytic activity">
    <reaction evidence="1">
        <text>[protein]-L-glutamate 5-O-methyl ester + H2O = L-glutamyl-[protein] + methanol + H(+)</text>
        <dbReference type="Rhea" id="RHEA:23236"/>
        <dbReference type="Rhea" id="RHEA-COMP:10208"/>
        <dbReference type="Rhea" id="RHEA-COMP:10311"/>
        <dbReference type="ChEBI" id="CHEBI:15377"/>
        <dbReference type="ChEBI" id="CHEBI:15378"/>
        <dbReference type="ChEBI" id="CHEBI:17790"/>
        <dbReference type="ChEBI" id="CHEBI:29973"/>
        <dbReference type="ChEBI" id="CHEBI:82795"/>
        <dbReference type="EC" id="3.1.1.61"/>
    </reaction>
</comment>
<comment type="catalytic activity">
    <reaction evidence="1">
        <text>L-glutaminyl-[protein] + H2O = L-glutamyl-[protein] + NH4(+)</text>
        <dbReference type="Rhea" id="RHEA:16441"/>
        <dbReference type="Rhea" id="RHEA-COMP:10207"/>
        <dbReference type="Rhea" id="RHEA-COMP:10208"/>
        <dbReference type="ChEBI" id="CHEBI:15377"/>
        <dbReference type="ChEBI" id="CHEBI:28938"/>
        <dbReference type="ChEBI" id="CHEBI:29973"/>
        <dbReference type="ChEBI" id="CHEBI:30011"/>
        <dbReference type="EC" id="3.5.1.44"/>
    </reaction>
</comment>
<comment type="subcellular location">
    <subcellularLocation>
        <location evidence="1">Cytoplasm</location>
    </subcellularLocation>
</comment>
<comment type="domain">
    <text evidence="1">Contains a C-terminal catalytic domain, and an N-terminal region which modulates catalytic activity.</text>
</comment>
<comment type="PTM">
    <text evidence="1">Phosphorylated by CheA. Phosphorylation of the N-terminal regulatory domain activates the methylesterase activity.</text>
</comment>
<comment type="similarity">
    <text evidence="1">Belongs to the CheB family.</text>
</comment>
<protein>
    <recommendedName>
        <fullName evidence="1">Protein-glutamate methylesterase/protein-glutamine glutaminase 1</fullName>
        <ecNumber evidence="1">3.1.1.61</ecNumber>
        <ecNumber evidence="1">3.5.1.44</ecNumber>
    </recommendedName>
</protein>
<reference key="1">
    <citation type="submission" date="2006-08" db="EMBL/GenBank/DDBJ databases">
        <title>Complete sequence of Shewanella sp. MR-4.</title>
        <authorList>
            <consortium name="US DOE Joint Genome Institute"/>
            <person name="Copeland A."/>
            <person name="Lucas S."/>
            <person name="Lapidus A."/>
            <person name="Barry K."/>
            <person name="Detter J.C."/>
            <person name="Glavina del Rio T."/>
            <person name="Hammon N."/>
            <person name="Israni S."/>
            <person name="Dalin E."/>
            <person name="Tice H."/>
            <person name="Pitluck S."/>
            <person name="Kiss H."/>
            <person name="Brettin T."/>
            <person name="Bruce D."/>
            <person name="Han C."/>
            <person name="Tapia R."/>
            <person name="Gilna P."/>
            <person name="Schmutz J."/>
            <person name="Larimer F."/>
            <person name="Land M."/>
            <person name="Hauser L."/>
            <person name="Kyrpides N."/>
            <person name="Mikhailova N."/>
            <person name="Nealson K."/>
            <person name="Konstantinidis K."/>
            <person name="Klappenbach J."/>
            <person name="Tiedje J."/>
            <person name="Richardson P."/>
        </authorList>
    </citation>
    <scope>NUCLEOTIDE SEQUENCE [LARGE SCALE GENOMIC DNA]</scope>
    <source>
        <strain>MR-4</strain>
    </source>
</reference>
<dbReference type="EC" id="3.1.1.61" evidence="1"/>
<dbReference type="EC" id="3.5.1.44" evidence="1"/>
<dbReference type="EMBL" id="CP000446">
    <property type="protein sequence ID" value="ABI38382.1"/>
    <property type="molecule type" value="Genomic_DNA"/>
</dbReference>
<dbReference type="RefSeq" id="WP_011622089.1">
    <property type="nucleotide sequence ID" value="NC_008321.1"/>
</dbReference>
<dbReference type="SMR" id="Q0HKN5"/>
<dbReference type="KEGG" id="she:Shewmr4_1303"/>
<dbReference type="HOGENOM" id="CLU_000445_51_0_6"/>
<dbReference type="GO" id="GO:0005737">
    <property type="term" value="C:cytoplasm"/>
    <property type="evidence" value="ECO:0007669"/>
    <property type="project" value="UniProtKB-SubCell"/>
</dbReference>
<dbReference type="GO" id="GO:0000156">
    <property type="term" value="F:phosphorelay response regulator activity"/>
    <property type="evidence" value="ECO:0007669"/>
    <property type="project" value="InterPro"/>
</dbReference>
<dbReference type="GO" id="GO:0008984">
    <property type="term" value="F:protein-glutamate methylesterase activity"/>
    <property type="evidence" value="ECO:0007669"/>
    <property type="project" value="UniProtKB-UniRule"/>
</dbReference>
<dbReference type="GO" id="GO:0050568">
    <property type="term" value="F:protein-glutamine glutaminase activity"/>
    <property type="evidence" value="ECO:0007669"/>
    <property type="project" value="UniProtKB-UniRule"/>
</dbReference>
<dbReference type="GO" id="GO:0006935">
    <property type="term" value="P:chemotaxis"/>
    <property type="evidence" value="ECO:0007669"/>
    <property type="project" value="UniProtKB-UniRule"/>
</dbReference>
<dbReference type="CDD" id="cd16432">
    <property type="entry name" value="CheB_Rec"/>
    <property type="match status" value="1"/>
</dbReference>
<dbReference type="CDD" id="cd17541">
    <property type="entry name" value="REC_CheB-like"/>
    <property type="match status" value="1"/>
</dbReference>
<dbReference type="FunFam" id="3.40.50.2300:FF:000077">
    <property type="entry name" value="Chemotaxis response regulator"/>
    <property type="match status" value="1"/>
</dbReference>
<dbReference type="FunFam" id="3.40.50.180:FF:000001">
    <property type="entry name" value="Protein-glutamate methylesterase/protein-glutamine glutaminase"/>
    <property type="match status" value="1"/>
</dbReference>
<dbReference type="Gene3D" id="3.40.50.2300">
    <property type="match status" value="1"/>
</dbReference>
<dbReference type="Gene3D" id="3.40.50.180">
    <property type="entry name" value="Methylesterase CheB, C-terminal domain"/>
    <property type="match status" value="1"/>
</dbReference>
<dbReference type="HAMAP" id="MF_00099">
    <property type="entry name" value="CheB_chemtxs"/>
    <property type="match status" value="1"/>
</dbReference>
<dbReference type="InterPro" id="IPR008248">
    <property type="entry name" value="CheB-like"/>
</dbReference>
<dbReference type="InterPro" id="IPR035909">
    <property type="entry name" value="CheB_C"/>
</dbReference>
<dbReference type="InterPro" id="IPR011006">
    <property type="entry name" value="CheY-like_superfamily"/>
</dbReference>
<dbReference type="InterPro" id="IPR000673">
    <property type="entry name" value="Sig_transdc_resp-reg_Me-estase"/>
</dbReference>
<dbReference type="InterPro" id="IPR001789">
    <property type="entry name" value="Sig_transdc_resp-reg_receiver"/>
</dbReference>
<dbReference type="NCBIfam" id="NF001965">
    <property type="entry name" value="PRK00742.1"/>
    <property type="match status" value="1"/>
</dbReference>
<dbReference type="PANTHER" id="PTHR42872">
    <property type="entry name" value="PROTEIN-GLUTAMATE METHYLESTERASE/PROTEIN-GLUTAMINE GLUTAMINASE"/>
    <property type="match status" value="1"/>
</dbReference>
<dbReference type="PANTHER" id="PTHR42872:SF3">
    <property type="entry name" value="PROTEIN-GLUTAMATE METHYLESTERASE_PROTEIN-GLUTAMINE GLUTAMINASE 1"/>
    <property type="match status" value="1"/>
</dbReference>
<dbReference type="Pfam" id="PF01339">
    <property type="entry name" value="CheB_methylest"/>
    <property type="match status" value="1"/>
</dbReference>
<dbReference type="Pfam" id="PF00072">
    <property type="entry name" value="Response_reg"/>
    <property type="match status" value="1"/>
</dbReference>
<dbReference type="PIRSF" id="PIRSF000876">
    <property type="entry name" value="RR_chemtxs_CheB"/>
    <property type="match status" value="1"/>
</dbReference>
<dbReference type="SMART" id="SM00448">
    <property type="entry name" value="REC"/>
    <property type="match status" value="1"/>
</dbReference>
<dbReference type="SUPFAM" id="SSF52172">
    <property type="entry name" value="CheY-like"/>
    <property type="match status" value="1"/>
</dbReference>
<dbReference type="SUPFAM" id="SSF52738">
    <property type="entry name" value="Methylesterase CheB, C-terminal domain"/>
    <property type="match status" value="1"/>
</dbReference>
<dbReference type="PROSITE" id="PS50122">
    <property type="entry name" value="CHEB"/>
    <property type="match status" value="1"/>
</dbReference>
<dbReference type="PROSITE" id="PS50110">
    <property type="entry name" value="RESPONSE_REGULATORY"/>
    <property type="match status" value="1"/>
</dbReference>
<keyword id="KW-0145">Chemotaxis</keyword>
<keyword id="KW-0963">Cytoplasm</keyword>
<keyword id="KW-0378">Hydrolase</keyword>
<keyword id="KW-0597">Phosphoprotein</keyword>
<proteinExistence type="inferred from homology"/>